<organism>
    <name type="scientific">Thermosynechococcus vestitus (strain NIES-2133 / IAM M-273 / BP-1)</name>
    <dbReference type="NCBI Taxonomy" id="197221"/>
    <lineage>
        <taxon>Bacteria</taxon>
        <taxon>Bacillati</taxon>
        <taxon>Cyanobacteriota</taxon>
        <taxon>Cyanophyceae</taxon>
        <taxon>Acaryochloridales</taxon>
        <taxon>Thermosynechococcaceae</taxon>
        <taxon>Thermosynechococcus</taxon>
    </lineage>
</organism>
<reference key="1">
    <citation type="journal article" date="2002" name="DNA Res.">
        <title>Complete genome structure of the thermophilic cyanobacterium Thermosynechococcus elongatus BP-1.</title>
        <authorList>
            <person name="Nakamura Y."/>
            <person name="Kaneko T."/>
            <person name="Sato S."/>
            <person name="Ikeuchi M."/>
            <person name="Katoh H."/>
            <person name="Sasamoto S."/>
            <person name="Watanabe A."/>
            <person name="Iriguchi M."/>
            <person name="Kawashima K."/>
            <person name="Kimura T."/>
            <person name="Kishida Y."/>
            <person name="Kiyokawa C."/>
            <person name="Kohara M."/>
            <person name="Matsumoto M."/>
            <person name="Matsuno A."/>
            <person name="Nakazaki N."/>
            <person name="Shimpo S."/>
            <person name="Sugimoto M."/>
            <person name="Takeuchi C."/>
            <person name="Yamada M."/>
            <person name="Tabata S."/>
        </authorList>
    </citation>
    <scope>NUCLEOTIDE SEQUENCE [LARGE SCALE GENOMIC DNA]</scope>
    <source>
        <strain>NIES-2133 / IAM M-273 / BP-1</strain>
    </source>
</reference>
<keyword id="KW-0240">DNA-directed RNA polymerase</keyword>
<keyword id="KW-0548">Nucleotidyltransferase</keyword>
<keyword id="KW-1185">Reference proteome</keyword>
<keyword id="KW-0804">Transcription</keyword>
<keyword id="KW-0808">Transferase</keyword>
<dbReference type="EC" id="2.7.7.6" evidence="1"/>
<dbReference type="EMBL" id="BA000039">
    <property type="protein sequence ID" value="BAC08193.1"/>
    <property type="molecule type" value="Genomic_DNA"/>
</dbReference>
<dbReference type="RefSeq" id="NP_681431.1">
    <property type="nucleotide sequence ID" value="NC_004113.1"/>
</dbReference>
<dbReference type="RefSeq" id="WP_011056489.1">
    <property type="nucleotide sequence ID" value="NC_004113.1"/>
</dbReference>
<dbReference type="SMR" id="Q8DL55"/>
<dbReference type="STRING" id="197221.gene:10747232"/>
<dbReference type="EnsemblBacteria" id="BAC08193">
    <property type="protein sequence ID" value="BAC08193"/>
    <property type="gene ID" value="BAC08193"/>
</dbReference>
<dbReference type="KEGG" id="tel:tll0642"/>
<dbReference type="PATRIC" id="fig|197221.4.peg.681"/>
<dbReference type="eggNOG" id="COG0085">
    <property type="taxonomic scope" value="Bacteria"/>
</dbReference>
<dbReference type="Proteomes" id="UP000000440">
    <property type="component" value="Chromosome"/>
</dbReference>
<dbReference type="GO" id="GO:0000428">
    <property type="term" value="C:DNA-directed RNA polymerase complex"/>
    <property type="evidence" value="ECO:0007669"/>
    <property type="project" value="UniProtKB-KW"/>
</dbReference>
<dbReference type="GO" id="GO:0003677">
    <property type="term" value="F:DNA binding"/>
    <property type="evidence" value="ECO:0007669"/>
    <property type="project" value="UniProtKB-UniRule"/>
</dbReference>
<dbReference type="GO" id="GO:0003899">
    <property type="term" value="F:DNA-directed RNA polymerase activity"/>
    <property type="evidence" value="ECO:0007669"/>
    <property type="project" value="UniProtKB-UniRule"/>
</dbReference>
<dbReference type="GO" id="GO:0032549">
    <property type="term" value="F:ribonucleoside binding"/>
    <property type="evidence" value="ECO:0007669"/>
    <property type="project" value="InterPro"/>
</dbReference>
<dbReference type="GO" id="GO:0006351">
    <property type="term" value="P:DNA-templated transcription"/>
    <property type="evidence" value="ECO:0007669"/>
    <property type="project" value="UniProtKB-UniRule"/>
</dbReference>
<dbReference type="CDD" id="cd00653">
    <property type="entry name" value="RNA_pol_B_RPB2"/>
    <property type="match status" value="1"/>
</dbReference>
<dbReference type="FunFam" id="3.90.1800.10:FF:000001">
    <property type="entry name" value="DNA-directed RNA polymerase subunit beta"/>
    <property type="match status" value="1"/>
</dbReference>
<dbReference type="Gene3D" id="2.40.50.100">
    <property type="match status" value="1"/>
</dbReference>
<dbReference type="Gene3D" id="2.40.50.150">
    <property type="match status" value="1"/>
</dbReference>
<dbReference type="Gene3D" id="3.90.1100.10">
    <property type="match status" value="1"/>
</dbReference>
<dbReference type="Gene3D" id="2.30.150.10">
    <property type="entry name" value="DNA-directed RNA polymerase, beta subunit, external 1 domain"/>
    <property type="match status" value="1"/>
</dbReference>
<dbReference type="Gene3D" id="2.40.270.10">
    <property type="entry name" value="DNA-directed RNA polymerase, subunit 2, domain 6"/>
    <property type="match status" value="1"/>
</dbReference>
<dbReference type="Gene3D" id="3.90.1800.10">
    <property type="entry name" value="RNA polymerase alpha subunit dimerisation domain"/>
    <property type="match status" value="1"/>
</dbReference>
<dbReference type="Gene3D" id="3.90.1110.10">
    <property type="entry name" value="RNA polymerase Rpb2, domain 2"/>
    <property type="match status" value="1"/>
</dbReference>
<dbReference type="HAMAP" id="MF_01321">
    <property type="entry name" value="RNApol_bact_RpoB"/>
    <property type="match status" value="1"/>
</dbReference>
<dbReference type="InterPro" id="IPR042107">
    <property type="entry name" value="DNA-dir_RNA_pol_bsu_ext_1_sf"/>
</dbReference>
<dbReference type="InterPro" id="IPR019462">
    <property type="entry name" value="DNA-dir_RNA_pol_bsu_external_1"/>
</dbReference>
<dbReference type="InterPro" id="IPR015712">
    <property type="entry name" value="DNA-dir_RNA_pol_su2"/>
</dbReference>
<dbReference type="InterPro" id="IPR007120">
    <property type="entry name" value="DNA-dir_RNAP_su2_dom"/>
</dbReference>
<dbReference type="InterPro" id="IPR037033">
    <property type="entry name" value="DNA-dir_RNAP_su2_hyb_sf"/>
</dbReference>
<dbReference type="InterPro" id="IPR010243">
    <property type="entry name" value="RNA_pol_bsu_bac"/>
</dbReference>
<dbReference type="InterPro" id="IPR007121">
    <property type="entry name" value="RNA_pol_bsu_CS"/>
</dbReference>
<dbReference type="InterPro" id="IPR007644">
    <property type="entry name" value="RNA_pol_bsu_protrusion"/>
</dbReference>
<dbReference type="InterPro" id="IPR007642">
    <property type="entry name" value="RNA_pol_Rpb2_2"/>
</dbReference>
<dbReference type="InterPro" id="IPR037034">
    <property type="entry name" value="RNA_pol_Rpb2_2_sf"/>
</dbReference>
<dbReference type="InterPro" id="IPR007645">
    <property type="entry name" value="RNA_pol_Rpb2_3"/>
</dbReference>
<dbReference type="InterPro" id="IPR007641">
    <property type="entry name" value="RNA_pol_Rpb2_7"/>
</dbReference>
<dbReference type="InterPro" id="IPR014724">
    <property type="entry name" value="RNA_pol_RPB2_OB-fold"/>
</dbReference>
<dbReference type="NCBIfam" id="NF001616">
    <property type="entry name" value="PRK00405.1"/>
    <property type="match status" value="1"/>
</dbReference>
<dbReference type="NCBIfam" id="TIGR02013">
    <property type="entry name" value="rpoB"/>
    <property type="match status" value="1"/>
</dbReference>
<dbReference type="PANTHER" id="PTHR20856">
    <property type="entry name" value="DNA-DIRECTED RNA POLYMERASE I SUBUNIT 2"/>
    <property type="match status" value="1"/>
</dbReference>
<dbReference type="Pfam" id="PF04563">
    <property type="entry name" value="RNA_pol_Rpb2_1"/>
    <property type="match status" value="1"/>
</dbReference>
<dbReference type="Pfam" id="PF04561">
    <property type="entry name" value="RNA_pol_Rpb2_2"/>
    <property type="match status" value="1"/>
</dbReference>
<dbReference type="Pfam" id="PF04565">
    <property type="entry name" value="RNA_pol_Rpb2_3"/>
    <property type="match status" value="1"/>
</dbReference>
<dbReference type="Pfam" id="PF10385">
    <property type="entry name" value="RNA_pol_Rpb2_45"/>
    <property type="match status" value="1"/>
</dbReference>
<dbReference type="Pfam" id="PF00562">
    <property type="entry name" value="RNA_pol_Rpb2_6"/>
    <property type="match status" value="1"/>
</dbReference>
<dbReference type="Pfam" id="PF04560">
    <property type="entry name" value="RNA_pol_Rpb2_7"/>
    <property type="match status" value="1"/>
</dbReference>
<dbReference type="SUPFAM" id="SSF64484">
    <property type="entry name" value="beta and beta-prime subunits of DNA dependent RNA-polymerase"/>
    <property type="match status" value="1"/>
</dbReference>
<dbReference type="PROSITE" id="PS01166">
    <property type="entry name" value="RNA_POL_BETA"/>
    <property type="match status" value="1"/>
</dbReference>
<evidence type="ECO:0000255" key="1">
    <source>
        <dbReference type="HAMAP-Rule" id="MF_01321"/>
    </source>
</evidence>
<evidence type="ECO:0000256" key="2">
    <source>
        <dbReference type="SAM" id="MobiDB-lite"/>
    </source>
</evidence>
<comment type="function">
    <text evidence="1">DNA-dependent RNA polymerase catalyzes the transcription of DNA into RNA using the four ribonucleoside triphosphates as substrates.</text>
</comment>
<comment type="catalytic activity">
    <reaction evidence="1">
        <text>RNA(n) + a ribonucleoside 5'-triphosphate = RNA(n+1) + diphosphate</text>
        <dbReference type="Rhea" id="RHEA:21248"/>
        <dbReference type="Rhea" id="RHEA-COMP:14527"/>
        <dbReference type="Rhea" id="RHEA-COMP:17342"/>
        <dbReference type="ChEBI" id="CHEBI:33019"/>
        <dbReference type="ChEBI" id="CHEBI:61557"/>
        <dbReference type="ChEBI" id="CHEBI:140395"/>
        <dbReference type="EC" id="2.7.7.6"/>
    </reaction>
</comment>
<comment type="subunit">
    <text evidence="1">In cyanobacteria the RNAP catalytic core is composed of 2 alpha, 1 beta, 1 beta', 1 gamma and 1 omega subunit. When a sigma factor is associated with the core the holoenzyme is formed, which can initiate transcription.</text>
</comment>
<comment type="similarity">
    <text evidence="1">Belongs to the RNA polymerase beta chain family.</text>
</comment>
<accession>Q8DL55</accession>
<name>RPOB_THEVB</name>
<protein>
    <recommendedName>
        <fullName evidence="1">DNA-directed RNA polymerase subunit beta</fullName>
        <shortName evidence="1">RNAP subunit beta</shortName>
        <ecNumber evidence="1">2.7.7.6</ecNumber>
    </recommendedName>
    <alternativeName>
        <fullName evidence="1">RNA polymerase subunit beta</fullName>
    </alternativeName>
    <alternativeName>
        <fullName evidence="1">Transcriptase subunit beta</fullName>
    </alternativeName>
</protein>
<sequence>MASNQIYTPPAFTLPDLVEIQRASFRWFLEEGLIEELESFSPITDYTGKIELHFLAKDYRLKEPKYSVDEAKRRDATYSMQMYVPTRLINKENGNIIDQDVFIGDLPLMTDRGTFIINGAERVIVNQIVRSPGVYYKSETDKNGRRTYNASLIPNRGAWLKFETDKNDLLWVRIDKTRKLSAHVLLKALGLTDSEILERLRHPEYYQKTVEKEGKFSEEEALIELYKKLRPGEPPTVSGGQQLLESRFFDPKRYDLGRVGRYKLNRKLQLNIPDSVRILTPEDILAAIDYLINLEFDLGTIDDIDHLGNRRVRSVGELLQNQVRVGLNRLERIIRERMTVSDTDSLTPTSLVNPKPLVAAIKEFFGSSQLSQFMDQTNPLAELTHKRRLSALGPGGLTRERAGFAVRDIHPSHYGRICPIETPEGPNAGLIGSLATHARVNEYGFIETPFYPVKDGRVLKDQPPIYMTADEEDDKRVAPGDVPTDENGYILGDVVPVRYRQDFTTTTPDQVDYVAVSPVQIISVATSLIPFLEHDDANRALMGSNMQRQAVPLLRPQRPLVGTGLEAQAARDSGMVILSQTNGVVSYVDANQIRVKTDNGPEITYTLQKYQRSNQDTCLNQRPIVFVGDRVQAGQVIADGSATEGGELALGQNILVAYMPWEGYNYEDAILISERLVQEDVYTSIHIEKYEIEARQTKLGPEEITREVPNVSEEALRQLDENGIIRIGAFVEAGDILVGKVTPKGESDQPPEEKLLRAIFGEKARDVRDNSLRVPNGEKGRVVDVRVFTREQGDELPPGANMVVRVYVAQKRKIQVGDKMAGRHGNKGIISRILPVEDMPFLPDGRPVDIVLNPLGVPSRMNVGQVYECLLGWAGACLGRRFKITPFDEMHGKEKSRETVHAKLQEARDVTGQDWVFNPENPGKMVVYDGRTGEPFDRPVTVGMAYMLKLVHLVDDKIHARSTGPYSLVTQQPLGGKAQQGGQRFGEMEVWALEAYGAAYILQELLTVKSDDMQGRNEALNAIVKGQSIPRPGTPESFKVLMRELQSLCLDISVRKASIPSFDDDGEMKPDPEVDLMVDVSPRRTPARPTIDYSALDDTDDKEGATTF</sequence>
<proteinExistence type="inferred from homology"/>
<feature type="chain" id="PRO_0000047980" description="DNA-directed RNA polymerase subunit beta">
    <location>
        <begin position="1"/>
        <end position="1108"/>
    </location>
</feature>
<feature type="region of interest" description="Disordered" evidence="2">
    <location>
        <begin position="1081"/>
        <end position="1108"/>
    </location>
</feature>
<gene>
    <name evidence="1" type="primary">rpoB</name>
    <name type="ordered locus">tll0642</name>
</gene>